<gene>
    <name type="ordered locus">RC1219</name>
</gene>
<protein>
    <recommendedName>
        <fullName>Uncharacterized membrane protein RC1219</fullName>
    </recommendedName>
</protein>
<feature type="chain" id="PRO_0000294411" description="Uncharacterized membrane protein RC1219">
    <location>
        <begin position="1"/>
        <end position="301"/>
    </location>
</feature>
<feature type="transmembrane region" description="Helical" evidence="1">
    <location>
        <begin position="1"/>
        <end position="21"/>
    </location>
</feature>
<feature type="transmembrane region" description="Helical" evidence="1">
    <location>
        <begin position="33"/>
        <end position="53"/>
    </location>
</feature>
<feature type="transmembrane region" description="Helical" evidence="1">
    <location>
        <begin position="72"/>
        <end position="92"/>
    </location>
</feature>
<feature type="transmembrane region" description="Helical" evidence="1">
    <location>
        <begin position="101"/>
        <end position="121"/>
    </location>
</feature>
<feature type="transmembrane region" description="Helical" evidence="1">
    <location>
        <begin position="124"/>
        <end position="144"/>
    </location>
</feature>
<feature type="transmembrane region" description="Helical" evidence="1">
    <location>
        <begin position="194"/>
        <end position="214"/>
    </location>
</feature>
<feature type="transmembrane region" description="Helical" evidence="1">
    <location>
        <begin position="220"/>
        <end position="240"/>
    </location>
</feature>
<feature type="transmembrane region" description="Helical" evidence="1">
    <location>
        <begin position="253"/>
        <end position="273"/>
    </location>
</feature>
<feature type="transmembrane region" description="Helical" evidence="1">
    <location>
        <begin position="274"/>
        <end position="294"/>
    </location>
</feature>
<proteinExistence type="inferred from homology"/>
<keyword id="KW-1003">Cell membrane</keyword>
<keyword id="KW-0472">Membrane</keyword>
<keyword id="KW-0812">Transmembrane</keyword>
<keyword id="KW-1133">Transmembrane helix</keyword>
<reference key="1">
    <citation type="journal article" date="2001" name="Science">
        <title>Mechanisms of evolution in Rickettsia conorii and R. prowazekii.</title>
        <authorList>
            <person name="Ogata H."/>
            <person name="Audic S."/>
            <person name="Renesto-Audiffren P."/>
            <person name="Fournier P.-E."/>
            <person name="Barbe V."/>
            <person name="Samson D."/>
            <person name="Roux V."/>
            <person name="Cossart P."/>
            <person name="Weissenbach J."/>
            <person name="Claverie J.-M."/>
            <person name="Raoult D."/>
        </authorList>
    </citation>
    <scope>NUCLEOTIDE SEQUENCE [LARGE SCALE GENOMIC DNA]</scope>
    <source>
        <strain>ATCC VR-613 / Malish 7</strain>
    </source>
</reference>
<comment type="subcellular location">
    <subcellularLocation>
        <location evidence="2">Cell membrane</location>
        <topology evidence="2">Multi-pass membrane protein</topology>
    </subcellularLocation>
</comment>
<comment type="similarity">
    <text evidence="2">Belongs to the TerC family.</text>
</comment>
<dbReference type="EMBL" id="AE006914">
    <property type="protein sequence ID" value="AAL03757.1"/>
    <property type="molecule type" value="Genomic_DNA"/>
</dbReference>
<dbReference type="PIR" id="C97852">
    <property type="entry name" value="C97852"/>
</dbReference>
<dbReference type="RefSeq" id="WP_010977784.1">
    <property type="nucleotide sequence ID" value="NC_003103.1"/>
</dbReference>
<dbReference type="GeneID" id="928373"/>
<dbReference type="KEGG" id="rco:RC1219"/>
<dbReference type="PATRIC" id="fig|272944.4.peg.1398"/>
<dbReference type="HOGENOM" id="CLU_045644_1_2_5"/>
<dbReference type="Proteomes" id="UP000000816">
    <property type="component" value="Chromosome"/>
</dbReference>
<dbReference type="GO" id="GO:0005886">
    <property type="term" value="C:plasma membrane"/>
    <property type="evidence" value="ECO:0007669"/>
    <property type="project" value="UniProtKB-SubCell"/>
</dbReference>
<dbReference type="InterPro" id="IPR005496">
    <property type="entry name" value="Integral_membrane_TerC"/>
</dbReference>
<dbReference type="InterPro" id="IPR022369">
    <property type="entry name" value="Integral_membrane_TerC_rswitch"/>
</dbReference>
<dbReference type="NCBIfam" id="TIGR03718">
    <property type="entry name" value="R_switched_Alx"/>
    <property type="match status" value="1"/>
</dbReference>
<dbReference type="PANTHER" id="PTHR30238">
    <property type="entry name" value="MEMBRANE BOUND PREDICTED REDOX MODULATOR"/>
    <property type="match status" value="1"/>
</dbReference>
<dbReference type="PANTHER" id="PTHR30238:SF0">
    <property type="entry name" value="THYLAKOID MEMBRANE PROTEIN TERC, CHLOROPLASTIC"/>
    <property type="match status" value="1"/>
</dbReference>
<dbReference type="Pfam" id="PF03741">
    <property type="entry name" value="TerC"/>
    <property type="match status" value="1"/>
</dbReference>
<accession>Q92GA4</accession>
<name>Y1219_RICCN</name>
<sequence>MSWIIFYTVIAALLILDLRIIHKNNTIMSFKESVLFSLFYLVIACLFGIYVYYNTGADHAREYYTCFLIEKAMSLDNIFVISIIFQFFKIPWQYQHRVLFFGIIGVIIFRAVMIYGGIILINKFAWLLYIFAVILIATGIKTFYVSHKTFDIQNSYIYKSIIKNLNITPNLEGNKFIVKRNNKLYCTPLFISLVLIEAIDLVFAIDSIPAIFAITNDVYIIYTSNIFAILGLRALFFCLAEIVERFSYIKYSLALILIFISFKIFIHHYIAIPEYVAFTVTMTLLLFGIIASIIRKNMIDH</sequence>
<organism>
    <name type="scientific">Rickettsia conorii (strain ATCC VR-613 / Malish 7)</name>
    <dbReference type="NCBI Taxonomy" id="272944"/>
    <lineage>
        <taxon>Bacteria</taxon>
        <taxon>Pseudomonadati</taxon>
        <taxon>Pseudomonadota</taxon>
        <taxon>Alphaproteobacteria</taxon>
        <taxon>Rickettsiales</taxon>
        <taxon>Rickettsiaceae</taxon>
        <taxon>Rickettsieae</taxon>
        <taxon>Rickettsia</taxon>
        <taxon>spotted fever group</taxon>
    </lineage>
</organism>
<evidence type="ECO:0000255" key="1"/>
<evidence type="ECO:0000305" key="2"/>